<keyword id="KW-0150">Chloroplast</keyword>
<keyword id="KW-0249">Electron transport</keyword>
<keyword id="KW-0472">Membrane</keyword>
<keyword id="KW-0602">Photosynthesis</keyword>
<keyword id="KW-0934">Plastid</keyword>
<keyword id="KW-0691">RNA editing</keyword>
<keyword id="KW-0793">Thylakoid</keyword>
<keyword id="KW-0812">Transmembrane</keyword>
<keyword id="KW-1133">Transmembrane helix</keyword>
<keyword id="KW-0813">Transport</keyword>
<organism>
    <name type="scientific">Hamamelis virginiana</name>
    <name type="common">Witch-hazel</name>
    <name type="synonym">Hamamelis macrophylla</name>
    <dbReference type="NCBI Taxonomy" id="4397"/>
    <lineage>
        <taxon>Eukaryota</taxon>
        <taxon>Viridiplantae</taxon>
        <taxon>Streptophyta</taxon>
        <taxon>Embryophyta</taxon>
        <taxon>Tracheophyta</taxon>
        <taxon>Spermatophyta</taxon>
        <taxon>Magnoliopsida</taxon>
        <taxon>eudicotyledons</taxon>
        <taxon>Gunneridae</taxon>
        <taxon>Pentapetalae</taxon>
        <taxon>Saxifragales</taxon>
        <taxon>Hamamelidaceae</taxon>
        <taxon>Hamamelis</taxon>
    </lineage>
</organism>
<reference key="1">
    <citation type="journal article" date="2004" name="Nucleic Acids Res.">
        <title>Rapid evolution of RNA editing sites in a small non-essential plastid gene.</title>
        <authorList>
            <person name="Fiebig A."/>
            <person name="Stegemann S."/>
            <person name="Bock R."/>
        </authorList>
    </citation>
    <scope>NUCLEOTIDE SEQUENCE [GENOMIC DNA]</scope>
    <scope>RNA EDITING</scope>
    <source>
        <tissue>Leaf</tissue>
    </source>
</reference>
<feature type="chain" id="PRO_0000220451" description="Cytochrome b6-f complex subunit 6">
    <location>
        <begin position="1"/>
        <end position="31"/>
    </location>
</feature>
<feature type="transmembrane region" description="Helical" evidence="1">
    <location>
        <begin position="4"/>
        <end position="24"/>
    </location>
</feature>
<sequence>MLTITSYFGFLLAALTITSALFIGLSKIRLI</sequence>
<evidence type="ECO:0000255" key="1">
    <source>
        <dbReference type="HAMAP-Rule" id="MF_00433"/>
    </source>
</evidence>
<evidence type="ECO:0000269" key="2">
    <source>
    </source>
</evidence>
<comment type="function">
    <text evidence="1">Component of the cytochrome b6-f complex, which mediates electron transfer between photosystem II (PSII) and photosystem I (PSI), cyclic electron flow around PSI, and state transitions. PetL is important for photoautotrophic growth as well as for electron transfer efficiency and stability of the cytochrome b6-f complex.</text>
</comment>
<comment type="subunit">
    <text evidence="1">The 4 large subunits of the cytochrome b6-f complex are cytochrome b6, subunit IV (17 kDa polypeptide, PetD), cytochrome f and the Rieske protein, while the 4 small subunits are PetG, PetL, PetM and PetN. The complex functions as a dimer.</text>
</comment>
<comment type="subcellular location">
    <subcellularLocation>
        <location evidence="1">Plastid</location>
        <location evidence="1">Chloroplast thylakoid membrane</location>
        <topology evidence="1">Single-pass membrane protein</topology>
    </subcellularLocation>
</comment>
<comment type="RNA editing">
    <location>
        <position position="2" evidence="2"/>
    </location>
    <location>
        <position position="15" evidence="2"/>
    </location>
</comment>
<comment type="similarity">
    <text evidence="1">Belongs to the PetL family.</text>
</comment>
<dbReference type="EMBL" id="AJ704437">
    <property type="protein sequence ID" value="CAG28649.1"/>
    <property type="molecule type" value="Genomic_DNA"/>
</dbReference>
<dbReference type="SMR" id="Q5K3S7"/>
<dbReference type="GO" id="GO:0009535">
    <property type="term" value="C:chloroplast thylakoid membrane"/>
    <property type="evidence" value="ECO:0007669"/>
    <property type="project" value="UniProtKB-SubCell"/>
</dbReference>
<dbReference type="GO" id="GO:0009512">
    <property type="term" value="C:cytochrome b6f complex"/>
    <property type="evidence" value="ECO:0007669"/>
    <property type="project" value="InterPro"/>
</dbReference>
<dbReference type="GO" id="GO:0045158">
    <property type="term" value="F:electron transporter, transferring electrons within cytochrome b6/f complex of photosystem II activity"/>
    <property type="evidence" value="ECO:0007669"/>
    <property type="project" value="UniProtKB-UniRule"/>
</dbReference>
<dbReference type="GO" id="GO:0015979">
    <property type="term" value="P:photosynthesis"/>
    <property type="evidence" value="ECO:0007669"/>
    <property type="project" value="UniProtKB-KW"/>
</dbReference>
<dbReference type="HAMAP" id="MF_00433">
    <property type="entry name" value="Cytb6_f_PetL"/>
    <property type="match status" value="1"/>
</dbReference>
<dbReference type="InterPro" id="IPR007802">
    <property type="entry name" value="Cyt_b6/f_cplx_su6"/>
</dbReference>
<dbReference type="PANTHER" id="PTHR37266">
    <property type="entry name" value="CYTOCHROME B6-F COMPLEX SUBUNIT 6"/>
    <property type="match status" value="1"/>
</dbReference>
<dbReference type="PANTHER" id="PTHR37266:SF1">
    <property type="entry name" value="CYTOCHROME B6-F COMPLEX SUBUNIT 6"/>
    <property type="match status" value="1"/>
</dbReference>
<dbReference type="Pfam" id="PF05115">
    <property type="entry name" value="PetL"/>
    <property type="match status" value="1"/>
</dbReference>
<dbReference type="SUPFAM" id="SSF103436">
    <property type="entry name" value="PetL subunit of the cytochrome b6f complex"/>
    <property type="match status" value="1"/>
</dbReference>
<protein>
    <recommendedName>
        <fullName evidence="1">Cytochrome b6-f complex subunit 6</fullName>
    </recommendedName>
    <alternativeName>
        <fullName evidence="1">Cytochrome b6-f complex subunit PetL</fullName>
    </alternativeName>
    <alternativeName>
        <fullName evidence="1">Cytochrome b6-f complex subunit VI</fullName>
    </alternativeName>
</protein>
<name>PETL_HAMVI</name>
<geneLocation type="chloroplast"/>
<gene>
    <name evidence="1" type="primary">petL</name>
</gene>
<proteinExistence type="evidence at transcript level"/>
<accession>Q5K3S7</accession>